<name>MRGX1_HUMAN</name>
<feature type="chain" id="PRO_0000069772" description="Mas-related G-protein coupled receptor member X1">
    <location>
        <begin position="1"/>
        <end position="322"/>
    </location>
</feature>
<feature type="topological domain" description="Extracellular" evidence="1">
    <location>
        <begin position="1"/>
        <end position="31"/>
    </location>
</feature>
<feature type="transmembrane region" description="Helical; Name=1" evidence="1">
    <location>
        <begin position="32"/>
        <end position="52"/>
    </location>
</feature>
<feature type="topological domain" description="Cytoplasmic" evidence="1">
    <location>
        <begin position="53"/>
        <end position="67"/>
    </location>
</feature>
<feature type="transmembrane region" description="Helical; Name=2" evidence="1">
    <location>
        <begin position="68"/>
        <end position="88"/>
    </location>
</feature>
<feature type="topological domain" description="Extracellular" evidence="1">
    <location>
        <begin position="89"/>
        <end position="96"/>
    </location>
</feature>
<feature type="transmembrane region" description="Helical; Name=3" evidence="1">
    <location>
        <begin position="97"/>
        <end position="117"/>
    </location>
</feature>
<feature type="topological domain" description="Cytoplasmic" evidence="1">
    <location>
        <begin position="118"/>
        <end position="144"/>
    </location>
</feature>
<feature type="transmembrane region" description="Helical; Name=4" evidence="1">
    <location>
        <begin position="145"/>
        <end position="165"/>
    </location>
</feature>
<feature type="topological domain" description="Extracellular" evidence="1">
    <location>
        <begin position="166"/>
        <end position="177"/>
    </location>
</feature>
<feature type="transmembrane region" description="Helical; Name=5" evidence="1">
    <location>
        <begin position="178"/>
        <end position="198"/>
    </location>
</feature>
<feature type="topological domain" description="Cytoplasmic" evidence="1">
    <location>
        <begin position="199"/>
        <end position="221"/>
    </location>
</feature>
<feature type="transmembrane region" description="Helical; Name=6" evidence="1">
    <location>
        <begin position="222"/>
        <end position="242"/>
    </location>
</feature>
<feature type="topological domain" description="Extracellular" evidence="1">
    <location>
        <begin position="243"/>
        <end position="254"/>
    </location>
</feature>
<feature type="transmembrane region" description="Helical; Name=7" evidence="1">
    <location>
        <begin position="255"/>
        <end position="275"/>
    </location>
</feature>
<feature type="topological domain" description="Cytoplasmic" evidence="1">
    <location>
        <begin position="276"/>
        <end position="322"/>
    </location>
</feature>
<feature type="glycosylation site" description="N-linked (GlcNAc...) asparagine" evidence="1">
    <location>
        <position position="16"/>
    </location>
</feature>
<feature type="sequence variant" id="VAR_019432" description="No alteration in ligand-mediated receptor activity; dbSNP:rs11024885." evidence="5">
    <original>I</original>
    <variation>V</variation>
    <location>
        <position position="36"/>
    </location>
</feature>
<feature type="sequence variant" id="VAR_075462" description="No alteration in ligand-mediated receptor activity; dbSNP:rs78179510." evidence="5">
    <original>A</original>
    <variation>T</variation>
    <location>
        <position position="46"/>
    </location>
</feature>
<feature type="sequence variant" id="VAR_075463" description="No alteration in ligand-mediated receptor activity; dbSNP:rs55954376." evidence="5">
    <original>R</original>
    <variation>L</variation>
    <location>
        <position position="55"/>
    </location>
</feature>
<feature type="sequence variant" id="VAR_075464" description="Decrease in ligand-mediated and ligand-independent receptor activity; dbSNP:rs111448117." evidence="5">
    <original>R</original>
    <variation>S</variation>
    <location>
        <position position="131"/>
    </location>
</feature>
<feature type="sequence variant" id="VAR_075465" description="Increase in ligand-mediated receptor activity; dbSNP:rs140351170." evidence="5">
    <original>H</original>
    <variation>R</variation>
    <location>
        <position position="133"/>
    </location>
</feature>
<feature type="sequence variant" id="VAR_075466" description="No alteration in ligand-mediated receptor activity; dbSNP:rs143702818." evidence="5">
    <original>H</original>
    <variation>R</variation>
    <location>
        <position position="137"/>
    </location>
</feature>
<feature type="sequence variant" id="VAR_075467" description="No alteration in ligand-mediated receptor activity; dbSNP:rs137866403." evidence="5">
    <original>F</original>
    <variation>L</variation>
    <location>
        <position position="273"/>
    </location>
</feature>
<feature type="sequence conflict" description="In Ref. 2; AAL86880." evidence="6" ref="2">
    <original>I</original>
    <variation>V</variation>
    <location>
        <position position="5"/>
    </location>
</feature>
<feature type="sequence conflict" description="In Ref. 2; AAL86880." evidence="6" ref="2">
    <original>F</original>
    <variation>L</variation>
    <location>
        <position position="278"/>
    </location>
</feature>
<feature type="sequence conflict" description="In Ref. 2; AAL86880." evidence="6" ref="2">
    <original>AS</original>
    <variation>TP</variation>
    <location>
        <begin position="298"/>
        <end position="299"/>
    </location>
</feature>
<feature type="sequence conflict" description="In Ref. 2; AAL86880." evidence="6" ref="2">
    <original>Q</original>
    <variation>W</variation>
    <location>
        <position position="307"/>
    </location>
</feature>
<feature type="sequence conflict" description="In Ref. 2; AAL86880." evidence="6" ref="2">
    <original>EEI</original>
    <variation>QET</variation>
    <location>
        <begin position="310"/>
        <end position="312"/>
    </location>
</feature>
<feature type="sequence conflict" description="In Ref. 6; AAH96835." evidence="6" ref="6">
    <original>E</original>
    <variation>D</variation>
    <location>
        <position position="321"/>
    </location>
</feature>
<feature type="helix" evidence="10">
    <location>
        <begin position="27"/>
        <end position="29"/>
    </location>
</feature>
<feature type="helix" evidence="10">
    <location>
        <begin position="30"/>
        <end position="54"/>
    </location>
</feature>
<feature type="helix" evidence="10">
    <location>
        <begin position="61"/>
        <end position="84"/>
    </location>
</feature>
<feature type="helix" evidence="7">
    <location>
        <begin position="93"/>
        <end position="97"/>
    </location>
</feature>
<feature type="helix" evidence="10">
    <location>
        <begin position="98"/>
        <end position="125"/>
    </location>
</feature>
<feature type="helix" evidence="10">
    <location>
        <begin position="127"/>
        <end position="132"/>
    </location>
</feature>
<feature type="helix" evidence="10">
    <location>
        <begin position="138"/>
        <end position="159"/>
    </location>
</feature>
<feature type="strand" evidence="7">
    <location>
        <begin position="161"/>
        <end position="163"/>
    </location>
</feature>
<feature type="turn" evidence="7">
    <location>
        <begin position="164"/>
        <end position="168"/>
    </location>
</feature>
<feature type="strand" evidence="8">
    <location>
        <begin position="170"/>
        <end position="172"/>
    </location>
</feature>
<feature type="helix" evidence="10">
    <location>
        <begin position="176"/>
        <end position="204"/>
    </location>
</feature>
<feature type="strand" evidence="9">
    <location>
        <begin position="207"/>
        <end position="209"/>
    </location>
</feature>
<feature type="helix" evidence="10">
    <location>
        <begin position="212"/>
        <end position="227"/>
    </location>
</feature>
<feature type="helix" evidence="10">
    <location>
        <begin position="230"/>
        <end position="238"/>
    </location>
</feature>
<feature type="turn" evidence="10">
    <location>
        <begin position="239"/>
        <end position="241"/>
    </location>
</feature>
<feature type="helix" evidence="10">
    <location>
        <begin position="246"/>
        <end position="251"/>
    </location>
</feature>
<feature type="turn" evidence="10">
    <location>
        <begin position="252"/>
        <end position="254"/>
    </location>
</feature>
<feature type="helix" evidence="10">
    <location>
        <begin position="255"/>
        <end position="272"/>
    </location>
</feature>
<feature type="helix" evidence="10">
    <location>
        <begin position="274"/>
        <end position="277"/>
    </location>
</feature>
<gene>
    <name type="primary">MRGPRX1</name>
    <name type="synonym">MRGX1</name>
    <name type="synonym">SNSR3</name>
    <name type="synonym">SNSR4</name>
</gene>
<organism>
    <name type="scientific">Homo sapiens</name>
    <name type="common">Human</name>
    <dbReference type="NCBI Taxonomy" id="9606"/>
    <lineage>
        <taxon>Eukaryota</taxon>
        <taxon>Metazoa</taxon>
        <taxon>Chordata</taxon>
        <taxon>Craniata</taxon>
        <taxon>Vertebrata</taxon>
        <taxon>Euteleostomi</taxon>
        <taxon>Mammalia</taxon>
        <taxon>Eutheria</taxon>
        <taxon>Euarchontoglires</taxon>
        <taxon>Primates</taxon>
        <taxon>Haplorrhini</taxon>
        <taxon>Catarrhini</taxon>
        <taxon>Hominidae</taxon>
        <taxon>Homo</taxon>
    </lineage>
</organism>
<keyword id="KW-0002">3D-structure</keyword>
<keyword id="KW-0011">Acute phase</keyword>
<keyword id="KW-1003">Cell membrane</keyword>
<keyword id="KW-0297">G-protein coupled receptor</keyword>
<keyword id="KW-0325">Glycoprotein</keyword>
<keyword id="KW-0472">Membrane</keyword>
<keyword id="KW-0675">Receptor</keyword>
<keyword id="KW-1185">Reference proteome</keyword>
<keyword id="KW-0807">Transducer</keyword>
<keyword id="KW-0812">Transmembrane</keyword>
<keyword id="KW-1133">Transmembrane helix</keyword>
<protein>
    <recommendedName>
        <fullName>Mas-related G-protein coupled receptor member X1</fullName>
    </recommendedName>
    <alternativeName>
        <fullName>Sensory neuron-specific G-protein coupled receptor 3/4</fullName>
    </alternativeName>
</protein>
<accession>Q96LB2</accession>
<accession>Q4V9L2</accession>
<accession>Q8TDD8</accession>
<accession>Q8TDD9</accession>
<evidence type="ECO:0000255" key="1"/>
<evidence type="ECO:0000255" key="2">
    <source>
        <dbReference type="PROSITE-ProRule" id="PRU00521"/>
    </source>
</evidence>
<evidence type="ECO:0000269" key="3">
    <source>
    </source>
</evidence>
<evidence type="ECO:0000269" key="4">
    <source>
    </source>
</evidence>
<evidence type="ECO:0000269" key="5">
    <source>
    </source>
</evidence>
<evidence type="ECO:0000305" key="6"/>
<evidence type="ECO:0007829" key="7">
    <source>
        <dbReference type="PDB" id="8DWG"/>
    </source>
</evidence>
<evidence type="ECO:0007829" key="8">
    <source>
        <dbReference type="PDB" id="8DWH"/>
    </source>
</evidence>
<evidence type="ECO:0007829" key="9">
    <source>
        <dbReference type="PDB" id="8HJ5"/>
    </source>
</evidence>
<evidence type="ECO:0007829" key="10">
    <source>
        <dbReference type="PDB" id="8JGF"/>
    </source>
</evidence>
<dbReference type="EMBL" id="AY042213">
    <property type="protein sequence ID" value="AAK91804.1"/>
    <property type="molecule type" value="Genomic_DNA"/>
</dbReference>
<dbReference type="EMBL" id="AF474989">
    <property type="protein sequence ID" value="AAL86880.2"/>
    <property type="molecule type" value="Genomic_DNA"/>
</dbReference>
<dbReference type="EMBL" id="AF474990">
    <property type="protein sequence ID" value="AAL86881.1"/>
    <property type="molecule type" value="Genomic_DNA"/>
</dbReference>
<dbReference type="EMBL" id="AB065846">
    <property type="protein sequence ID" value="BAC06064.1"/>
    <property type="molecule type" value="Genomic_DNA"/>
</dbReference>
<dbReference type="EMBL" id="AB083628">
    <property type="protein sequence ID" value="BAB89341.1"/>
    <property type="molecule type" value="Genomic_DNA"/>
</dbReference>
<dbReference type="EMBL" id="AC023078">
    <property type="status" value="NOT_ANNOTATED_CDS"/>
    <property type="molecule type" value="Genomic_DNA"/>
</dbReference>
<dbReference type="EMBL" id="BC096835">
    <property type="protein sequence ID" value="AAH96835.1"/>
    <property type="molecule type" value="mRNA"/>
</dbReference>
<dbReference type="CCDS" id="CCDS7846.1"/>
<dbReference type="RefSeq" id="NP_001380507.1">
    <property type="nucleotide sequence ID" value="NM_001393578.1"/>
</dbReference>
<dbReference type="RefSeq" id="NP_671732.3">
    <property type="nucleotide sequence ID" value="NM_147199.4"/>
</dbReference>
<dbReference type="PDB" id="8DWC">
    <property type="method" value="EM"/>
    <property type="resolution" value="2.87 A"/>
    <property type="chains" value="R=2-322"/>
</dbReference>
<dbReference type="PDB" id="8DWG">
    <property type="method" value="EM"/>
    <property type="resolution" value="2.71 A"/>
    <property type="chains" value="R=2-322"/>
</dbReference>
<dbReference type="PDB" id="8DWH">
    <property type="method" value="EM"/>
    <property type="resolution" value="3.25 A"/>
    <property type="chains" value="R=2-322"/>
</dbReference>
<dbReference type="PDB" id="8HJ5">
    <property type="method" value="EM"/>
    <property type="resolution" value="3.00 A"/>
    <property type="chains" value="F=1-322"/>
</dbReference>
<dbReference type="PDB" id="8JGB">
    <property type="method" value="EM"/>
    <property type="resolution" value="2.84 A"/>
    <property type="chains" value="R=1-319"/>
</dbReference>
<dbReference type="PDB" id="8JGF">
    <property type="method" value="EM"/>
    <property type="resolution" value="2.70 A"/>
    <property type="chains" value="R=1-319"/>
</dbReference>
<dbReference type="PDB" id="8JGG">
    <property type="method" value="EM"/>
    <property type="resolution" value="3.00 A"/>
    <property type="chains" value="R=1-322"/>
</dbReference>
<dbReference type="PDBsum" id="8DWC"/>
<dbReference type="PDBsum" id="8DWG"/>
<dbReference type="PDBsum" id="8DWH"/>
<dbReference type="PDBsum" id="8HJ5"/>
<dbReference type="PDBsum" id="8JGB"/>
<dbReference type="PDBsum" id="8JGF"/>
<dbReference type="PDBsum" id="8JGG"/>
<dbReference type="EMDB" id="EMD-27752"/>
<dbReference type="EMDB" id="EMD-27753"/>
<dbReference type="EMDB" id="EMD-27754"/>
<dbReference type="EMDB" id="EMD-34833"/>
<dbReference type="EMDB" id="EMD-36229"/>
<dbReference type="EMDB" id="EMD-36232"/>
<dbReference type="EMDB" id="EMD-36233"/>
<dbReference type="SMR" id="Q96LB2"/>
<dbReference type="BioGRID" id="129233">
    <property type="interactions" value="4"/>
</dbReference>
<dbReference type="FunCoup" id="Q96LB2">
    <property type="interactions" value="59"/>
</dbReference>
<dbReference type="STRING" id="9606.ENSP00000305766"/>
<dbReference type="BindingDB" id="Q96LB2"/>
<dbReference type="ChEMBL" id="CHEMBL5850"/>
<dbReference type="GuidetoPHARMACOLOGY" id="156"/>
<dbReference type="GlyCosmos" id="Q96LB2">
    <property type="glycosylation" value="1 site, No reported glycans"/>
</dbReference>
<dbReference type="GlyGen" id="Q96LB2">
    <property type="glycosylation" value="1 site"/>
</dbReference>
<dbReference type="iPTMnet" id="Q96LB2"/>
<dbReference type="PhosphoSitePlus" id="Q96LB2"/>
<dbReference type="BioMuta" id="MRGPRX1"/>
<dbReference type="DMDM" id="50401128"/>
<dbReference type="MassIVE" id="Q96LB2"/>
<dbReference type="PaxDb" id="9606-ENSP00000305766"/>
<dbReference type="PeptideAtlas" id="Q96LB2"/>
<dbReference type="Antibodypedia" id="25195">
    <property type="antibodies" value="127 antibodies from 26 providers"/>
</dbReference>
<dbReference type="DNASU" id="259249"/>
<dbReference type="Ensembl" id="ENST00000302797.4">
    <property type="protein sequence ID" value="ENSP00000305766.3"/>
    <property type="gene ID" value="ENSG00000170255.8"/>
</dbReference>
<dbReference type="Ensembl" id="ENST00000526914.2">
    <property type="protein sequence ID" value="ENSP00000499076.2"/>
    <property type="gene ID" value="ENSG00000170255.8"/>
</dbReference>
<dbReference type="GeneID" id="259249"/>
<dbReference type="KEGG" id="hsa:259249"/>
<dbReference type="MANE-Select" id="ENST00000526914.2">
    <property type="protein sequence ID" value="ENSP00000499076.2"/>
    <property type="RefSeq nucleotide sequence ID" value="NM_001393578.1"/>
    <property type="RefSeq protein sequence ID" value="NP_001380507.1"/>
</dbReference>
<dbReference type="AGR" id="HGNC:17962"/>
<dbReference type="CTD" id="259249"/>
<dbReference type="DisGeNET" id="259249"/>
<dbReference type="GeneCards" id="MRGPRX1"/>
<dbReference type="HGNC" id="HGNC:17962">
    <property type="gene designation" value="MRGPRX1"/>
</dbReference>
<dbReference type="HPA" id="ENSG00000170255">
    <property type="expression patterns" value="Not detected"/>
</dbReference>
<dbReference type="MIM" id="607227">
    <property type="type" value="gene"/>
</dbReference>
<dbReference type="neXtProt" id="NX_Q96LB2"/>
<dbReference type="OpenTargets" id="ENSG00000170255"/>
<dbReference type="PharmGKB" id="PA142671334"/>
<dbReference type="VEuPathDB" id="HostDB:ENSG00000170255"/>
<dbReference type="eggNOG" id="ENOG502RTWA">
    <property type="taxonomic scope" value="Eukaryota"/>
</dbReference>
<dbReference type="GeneTree" id="ENSGT01030000234639"/>
<dbReference type="HOGENOM" id="CLU_009579_4_1_1"/>
<dbReference type="InParanoid" id="Q96LB2"/>
<dbReference type="OMA" id="ITAGWVM"/>
<dbReference type="OrthoDB" id="9631784at2759"/>
<dbReference type="PAN-GO" id="Q96LB2">
    <property type="GO annotations" value="2 GO annotations based on evolutionary models"/>
</dbReference>
<dbReference type="PhylomeDB" id="Q96LB2"/>
<dbReference type="TreeFam" id="TF336336"/>
<dbReference type="PathwayCommons" id="Q96LB2"/>
<dbReference type="SignaLink" id="Q96LB2"/>
<dbReference type="SIGNOR" id="Q96LB2"/>
<dbReference type="BioGRID-ORCS" id="259249">
    <property type="hits" value="13 hits in 1131 CRISPR screens"/>
</dbReference>
<dbReference type="GeneWiki" id="MRGPRX1"/>
<dbReference type="GenomeRNAi" id="259249"/>
<dbReference type="Pharos" id="Q96LB2">
    <property type="development level" value="Tchem"/>
</dbReference>
<dbReference type="PRO" id="PR:Q96LB2"/>
<dbReference type="Proteomes" id="UP000005640">
    <property type="component" value="Chromosome 11"/>
</dbReference>
<dbReference type="RNAct" id="Q96LB2">
    <property type="molecule type" value="protein"/>
</dbReference>
<dbReference type="Bgee" id="ENSG00000170255">
    <property type="expression patterns" value="Expressed in primordial germ cell in gonad and 6 other cell types or tissues"/>
</dbReference>
<dbReference type="ExpressionAtlas" id="Q96LB2">
    <property type="expression patterns" value="baseline and differential"/>
</dbReference>
<dbReference type="GO" id="GO:0009986">
    <property type="term" value="C:cell surface"/>
    <property type="evidence" value="ECO:0000305"/>
    <property type="project" value="UniProtKB"/>
</dbReference>
<dbReference type="GO" id="GO:0005886">
    <property type="term" value="C:plasma membrane"/>
    <property type="evidence" value="ECO:0000318"/>
    <property type="project" value="GO_Central"/>
</dbReference>
<dbReference type="GO" id="GO:0004930">
    <property type="term" value="F:G protein-coupled receptor activity"/>
    <property type="evidence" value="ECO:0000318"/>
    <property type="project" value="GO_Central"/>
</dbReference>
<dbReference type="GO" id="GO:0004888">
    <property type="term" value="F:transmembrane signaling receptor activity"/>
    <property type="evidence" value="ECO:0000315"/>
    <property type="project" value="UniProtKB"/>
</dbReference>
<dbReference type="GO" id="GO:0006953">
    <property type="term" value="P:acute-phase response"/>
    <property type="evidence" value="ECO:0007669"/>
    <property type="project" value="UniProtKB-KW"/>
</dbReference>
<dbReference type="GO" id="GO:0007166">
    <property type="term" value="P:cell surface receptor signaling pathway"/>
    <property type="evidence" value="ECO:0000315"/>
    <property type="project" value="UniProtKB"/>
</dbReference>
<dbReference type="GO" id="GO:0007186">
    <property type="term" value="P:G protein-coupled receptor signaling pathway"/>
    <property type="evidence" value="ECO:0000318"/>
    <property type="project" value="GO_Central"/>
</dbReference>
<dbReference type="GO" id="GO:1902349">
    <property type="term" value="P:response to chloroquine"/>
    <property type="evidence" value="ECO:0000315"/>
    <property type="project" value="UniProtKB"/>
</dbReference>
<dbReference type="GO" id="GO:0007165">
    <property type="term" value="P:signal transduction"/>
    <property type="evidence" value="ECO:0000315"/>
    <property type="project" value="UniProtKB"/>
</dbReference>
<dbReference type="CDD" id="cd15106">
    <property type="entry name" value="7tmA_MrgprX-like"/>
    <property type="match status" value="1"/>
</dbReference>
<dbReference type="FunFam" id="1.20.1070.10:FF:000140">
    <property type="entry name" value="Mas-related G-protein coupled receptor member X2"/>
    <property type="match status" value="1"/>
</dbReference>
<dbReference type="Gene3D" id="1.20.1070.10">
    <property type="entry name" value="Rhodopsin 7-helix transmembrane proteins"/>
    <property type="match status" value="1"/>
</dbReference>
<dbReference type="InterPro" id="IPR000276">
    <property type="entry name" value="GPCR_Rhodpsn"/>
</dbReference>
<dbReference type="InterPro" id="IPR017452">
    <property type="entry name" value="GPCR_Rhodpsn_7TM"/>
</dbReference>
<dbReference type="InterPro" id="IPR026234">
    <property type="entry name" value="MRGPCRFAMILY"/>
</dbReference>
<dbReference type="PANTHER" id="PTHR11334">
    <property type="entry name" value="MAS-RELATED G-PROTEIN COUPLED RECEPTOR"/>
    <property type="match status" value="1"/>
</dbReference>
<dbReference type="PANTHER" id="PTHR11334:SF22">
    <property type="entry name" value="MAS-RELATED G-PROTEIN COUPLED RECEPTOR MRG-RELATED"/>
    <property type="match status" value="1"/>
</dbReference>
<dbReference type="Pfam" id="PF00001">
    <property type="entry name" value="7tm_1"/>
    <property type="match status" value="1"/>
</dbReference>
<dbReference type="PRINTS" id="PR00237">
    <property type="entry name" value="GPCRRHODOPSN"/>
</dbReference>
<dbReference type="PRINTS" id="PR02108">
    <property type="entry name" value="MRGPCRFAMILY"/>
</dbReference>
<dbReference type="SUPFAM" id="SSF81321">
    <property type="entry name" value="Family A G protein-coupled receptor-like"/>
    <property type="match status" value="1"/>
</dbReference>
<dbReference type="PROSITE" id="PS00237">
    <property type="entry name" value="G_PROTEIN_RECEP_F1_1"/>
    <property type="match status" value="1"/>
</dbReference>
<dbReference type="PROSITE" id="PS50262">
    <property type="entry name" value="G_PROTEIN_RECEP_F1_2"/>
    <property type="match status" value="1"/>
</dbReference>
<proteinExistence type="evidence at protein level"/>
<comment type="function">
    <text evidence="3 4 5">Orphan receptor. Probably involved in the function of nociceptive neurons. May regulate nociceptor function and/or development, including the sensation or modulation of pain. Potently activated by enkephalins including BAM22 (bovine adrenal medulla peptide 22) and BAM (8-22) (PubMed:26582731). BAM22 is the most potent compound and evoked a large and dose-dependent release of intracellular calcium in stably transfected cells. G(alpha)q proteins are involved in the calcium-signaling pathway. Activated by the antimalarial drug, chloroquine. May mediate chloroquine-induced itch, in a histamine-independent manner.</text>
</comment>
<comment type="subcellular location">
    <subcellularLocation>
        <location>Cell membrane</location>
        <topology>Multi-pass membrane protein</topology>
    </subcellularLocation>
</comment>
<comment type="tissue specificity">
    <text evidence="3">Uniquely localized in a subset of small dorsal root and trigeminal sensory neurons.</text>
</comment>
<comment type="miscellaneous">
    <text>Activation of this receptor requires concentrations that exceed the chloroquine concentrations observed in plasma of patients undergoing chloroquine treatment. However, chloroquine accumulates at much higher level in the skin where the receptor is located. Chloroquine-induced itch is very common among black Africans (up to 70%) but less common in other populations.</text>
</comment>
<comment type="similarity">
    <text evidence="2">Belongs to the G-protein coupled receptor 1 family. Mas subfamily.</text>
</comment>
<reference key="1">
    <citation type="journal article" date="2001" name="Cell">
        <title>A diverse family of GPCRs expressed in specific subsets of nociceptive sensory neurons.</title>
        <authorList>
            <person name="Dong X."/>
            <person name="Han S.-K."/>
            <person name="Zylka M.J."/>
            <person name="Simon M.I."/>
            <person name="Anderson D.J."/>
        </authorList>
    </citation>
    <scope>NUCLEOTIDE SEQUENCE [GENOMIC DNA]</scope>
</reference>
<reference key="2">
    <citation type="journal article" date="2002" name="Nat. Neurosci.">
        <title>Proenkephalin A gene products activate a new family of sensory neuron-specific GPCRs.</title>
        <authorList>
            <person name="Lembo P.M.C."/>
            <person name="Grazzini E."/>
            <person name="Groblewski T."/>
            <person name="O'Donnell D."/>
            <person name="Roy M.-O."/>
            <person name="Zhang J."/>
            <person name="Hoffert C."/>
            <person name="Cao J."/>
            <person name="Schmidt R."/>
            <person name="Pelletier M."/>
            <person name="Labarre M."/>
            <person name="Gosselin M."/>
            <person name="Fortin Y."/>
            <person name="Banville D."/>
            <person name="Shen S."/>
            <person name="Stroem P."/>
            <person name="Payza K."/>
            <person name="Dray A."/>
            <person name="Walker P."/>
            <person name="Ahmad S."/>
        </authorList>
    </citation>
    <scope>NUCLEOTIDE SEQUENCE [GENOMIC DNA]</scope>
    <scope>FUNCTION</scope>
    <scope>TISSUE SPECIFICITY</scope>
</reference>
<reference key="3">
    <citation type="submission" date="2001-07" db="EMBL/GenBank/DDBJ databases">
        <title>Genome-wide discovery and analysis of human seven transmembrane helix receptor genes.</title>
        <authorList>
            <person name="Suwa M."/>
            <person name="Sato T."/>
            <person name="Okouchi I."/>
            <person name="Arita M."/>
            <person name="Futami K."/>
            <person name="Matsumoto S."/>
            <person name="Tsutsumi S."/>
            <person name="Aburatani H."/>
            <person name="Asai K."/>
            <person name="Akiyama Y."/>
        </authorList>
    </citation>
    <scope>NUCLEOTIDE SEQUENCE [GENOMIC DNA]</scope>
</reference>
<reference key="4">
    <citation type="journal article" date="2002" name="FEBS Lett.">
        <title>Identification of G protein-coupled receptor genes from the human genome sequence.</title>
        <authorList>
            <person name="Takeda S."/>
            <person name="Kadowaki S."/>
            <person name="Haga T."/>
            <person name="Takaesu H."/>
            <person name="Mitaku S."/>
        </authorList>
    </citation>
    <scope>NUCLEOTIDE SEQUENCE [LARGE SCALE GENOMIC DNA]</scope>
</reference>
<reference key="5">
    <citation type="journal article" date="2006" name="Nature">
        <title>Human chromosome 11 DNA sequence and analysis including novel gene identification.</title>
        <authorList>
            <person name="Taylor T.D."/>
            <person name="Noguchi H."/>
            <person name="Totoki Y."/>
            <person name="Toyoda A."/>
            <person name="Kuroki Y."/>
            <person name="Dewar K."/>
            <person name="Lloyd C."/>
            <person name="Itoh T."/>
            <person name="Takeda T."/>
            <person name="Kim D.-W."/>
            <person name="She X."/>
            <person name="Barlow K.F."/>
            <person name="Bloom T."/>
            <person name="Bruford E."/>
            <person name="Chang J.L."/>
            <person name="Cuomo C.A."/>
            <person name="Eichler E."/>
            <person name="FitzGerald M.G."/>
            <person name="Jaffe D.B."/>
            <person name="LaButti K."/>
            <person name="Nicol R."/>
            <person name="Park H.-S."/>
            <person name="Seaman C."/>
            <person name="Sougnez C."/>
            <person name="Yang X."/>
            <person name="Zimmer A.R."/>
            <person name="Zody M.C."/>
            <person name="Birren B.W."/>
            <person name="Nusbaum C."/>
            <person name="Fujiyama A."/>
            <person name="Hattori M."/>
            <person name="Rogers J."/>
            <person name="Lander E.S."/>
            <person name="Sakaki Y."/>
        </authorList>
    </citation>
    <scope>NUCLEOTIDE SEQUENCE [LARGE SCALE GENOMIC DNA]</scope>
</reference>
<reference key="6">
    <citation type="journal article" date="2004" name="Genome Res.">
        <title>The status, quality, and expansion of the NIH full-length cDNA project: the Mammalian Gene Collection (MGC).</title>
        <authorList>
            <consortium name="The MGC Project Team"/>
        </authorList>
    </citation>
    <scope>NUCLEOTIDE SEQUENCE [LARGE SCALE MRNA]</scope>
</reference>
<reference key="7">
    <citation type="journal article" date="2009" name="Cell">
        <title>Sensory neuron-specific GPCR Mrgprs are itch receptors mediating chloroquine-induced pruritus.</title>
        <authorList>
            <person name="Liu Q."/>
            <person name="Tang Z."/>
            <person name="Surdenikova L."/>
            <person name="Kim S."/>
            <person name="Patel K.N."/>
            <person name="Kim A."/>
            <person name="Ru F."/>
            <person name="Guan Y."/>
            <person name="Weng H.J."/>
            <person name="Geng Y."/>
            <person name="Undem B.J."/>
            <person name="Kollarik M."/>
            <person name="Chen Z.F."/>
            <person name="Anderson D.J."/>
            <person name="Dong X."/>
        </authorList>
    </citation>
    <scope>FUNCTION AS ITCH RECEPTOR</scope>
</reference>
<reference key="8">
    <citation type="journal article" date="2016" name="J. Pharmacol. Exp. Ther.">
        <title>Novel probes establish mas-related G protein-coupled receptor X1 variants as receptors with loss or gain of function.</title>
        <authorList>
            <person name="Heller D."/>
            <person name="Doyle J.R."/>
            <person name="Raman V.S."/>
            <person name="Beinborn M."/>
            <person name="Kumar K."/>
            <person name="Kopin A.S."/>
        </authorList>
    </citation>
    <scope>VARIANTS VAL-36; THR-46; LEU-55; SER-131; ARG-133; ARG-137 AND LEU-273</scope>
    <scope>CHARACTERIZATION OF VARIANTS VAL-36; THR-46; LEU-55; SER-131; ARG-133; ARG-137 AND LEU-273</scope>
    <scope>FUNCTION</scope>
</reference>
<sequence>MDPTISTLDTELTPINGTEETLCYKQTLSLTVLTCIVSLVGLTGNAVVLWLLGCRMRRNAFSIYILNLAAADFLFLSGRLIYSLLSFISIPHTISKILYPVMMFSYFAGLSFLSAVSTERCLSVLWPIWYRCHRPTHLSAVVCVLLWALSLLRSILEWMLCGFLFSGADSAWCQTSDFITVAWLIFLCVVLCGSSLVLLIRILCGSRKIPLTRLYVTILLTVLVFLLCGLPFGIQFFLFLWIHVDREVLFCHVHLVSIFLSALNSSANPIIYFFVGSFRQRQNRQNLKLVLQRALQDASEVDEGGGQLPEEILELSGSRLEQ</sequence>